<organism>
    <name type="scientific">Escherichia coli O6:H1 (strain CFT073 / ATCC 700928 / UPEC)</name>
    <dbReference type="NCBI Taxonomy" id="199310"/>
    <lineage>
        <taxon>Bacteria</taxon>
        <taxon>Pseudomonadati</taxon>
        <taxon>Pseudomonadota</taxon>
        <taxon>Gammaproteobacteria</taxon>
        <taxon>Enterobacterales</taxon>
        <taxon>Enterobacteriaceae</taxon>
        <taxon>Escherichia</taxon>
    </lineage>
</organism>
<feature type="signal peptide" evidence="1">
    <location>
        <begin position="1"/>
        <end position="22"/>
    </location>
</feature>
<feature type="chain" id="PRO_0000044595" description="Uncharacterized protein YjeI">
    <location>
        <begin position="23"/>
        <end position="117"/>
    </location>
</feature>
<keyword id="KW-1185">Reference proteome</keyword>
<keyword id="KW-0732">Signal</keyword>
<accession>P0AF71</accession>
<accession>P39278</accession>
<protein>
    <recommendedName>
        <fullName>Uncharacterized protein YjeI</fullName>
    </recommendedName>
</protein>
<comment type="sequence caution" evidence="2">
    <conflict type="erroneous initiation">
        <sequence resource="EMBL-CDS" id="AAN83650"/>
    </conflict>
</comment>
<sequence>MHVKYLAGIVGAALLMAGCSSSNELSAAGQSVRIVDEQPGAECQLIGTATGKQSNWLSGQHGEEGGSMRGAANDLRNQAAAMGGNVIYGISSPSQGMLSSFVPTDSQIIGQVYKCPN</sequence>
<reference key="1">
    <citation type="journal article" date="2002" name="Proc. Natl. Acad. Sci. U.S.A.">
        <title>Extensive mosaic structure revealed by the complete genome sequence of uropathogenic Escherichia coli.</title>
        <authorList>
            <person name="Welch R.A."/>
            <person name="Burland V."/>
            <person name="Plunkett G. III"/>
            <person name="Redford P."/>
            <person name="Roesch P."/>
            <person name="Rasko D."/>
            <person name="Buckles E.L."/>
            <person name="Liou S.-R."/>
            <person name="Boutin A."/>
            <person name="Hackett J."/>
            <person name="Stroud D."/>
            <person name="Mayhew G.F."/>
            <person name="Rose D.J."/>
            <person name="Zhou S."/>
            <person name="Schwartz D.C."/>
            <person name="Perna N.T."/>
            <person name="Mobley H.L.T."/>
            <person name="Donnenberg M.S."/>
            <person name="Blattner F.R."/>
        </authorList>
    </citation>
    <scope>NUCLEOTIDE SEQUENCE [LARGE SCALE GENOMIC DNA]</scope>
    <source>
        <strain>CFT073 / ATCC 700928 / UPEC</strain>
    </source>
</reference>
<proteinExistence type="inferred from homology"/>
<evidence type="ECO:0000255" key="1">
    <source>
        <dbReference type="PROSITE-ProRule" id="PRU00303"/>
    </source>
</evidence>
<evidence type="ECO:0000305" key="2"/>
<gene>
    <name type="primary">yjeI</name>
    <name type="ordered locus">c5228</name>
</gene>
<name>YJEI_ECOL6</name>
<dbReference type="EMBL" id="AE014075">
    <property type="protein sequence ID" value="AAN83650.1"/>
    <property type="status" value="ALT_INIT"/>
    <property type="molecule type" value="Genomic_DNA"/>
</dbReference>
<dbReference type="RefSeq" id="WP_000558209.1">
    <property type="nucleotide sequence ID" value="NZ_CP051263.1"/>
</dbReference>
<dbReference type="SMR" id="P0AF71"/>
<dbReference type="STRING" id="199310.c5228"/>
<dbReference type="KEGG" id="ecc:c5228"/>
<dbReference type="eggNOG" id="ENOG50316V4">
    <property type="taxonomic scope" value="Bacteria"/>
</dbReference>
<dbReference type="HOGENOM" id="CLU_128258_2_0_6"/>
<dbReference type="Proteomes" id="UP000001410">
    <property type="component" value="Chromosome"/>
</dbReference>
<dbReference type="InterPro" id="IPR025294">
    <property type="entry name" value="DUF4156"/>
</dbReference>
<dbReference type="Pfam" id="PF13698">
    <property type="entry name" value="DUF4156"/>
    <property type="match status" value="1"/>
</dbReference>
<dbReference type="PROSITE" id="PS51257">
    <property type="entry name" value="PROKAR_LIPOPROTEIN"/>
    <property type="match status" value="1"/>
</dbReference>